<dbReference type="EMBL" id="BX571857">
    <property type="protein sequence ID" value="CAG43465.1"/>
    <property type="molecule type" value="Genomic_DNA"/>
</dbReference>
<dbReference type="RefSeq" id="WP_000219066.1">
    <property type="nucleotide sequence ID" value="NC_002953.3"/>
</dbReference>
<dbReference type="SMR" id="Q6G8J1"/>
<dbReference type="KEGG" id="sas:SAS1662"/>
<dbReference type="HOGENOM" id="CLU_037628_6_0_9"/>
<dbReference type="GO" id="GO:0003700">
    <property type="term" value="F:DNA-binding transcription factor activity"/>
    <property type="evidence" value="ECO:0007669"/>
    <property type="project" value="TreeGrafter"/>
</dbReference>
<dbReference type="GO" id="GO:0000976">
    <property type="term" value="F:transcription cis-regulatory region binding"/>
    <property type="evidence" value="ECO:0007669"/>
    <property type="project" value="TreeGrafter"/>
</dbReference>
<dbReference type="CDD" id="cd01392">
    <property type="entry name" value="HTH_LacI"/>
    <property type="match status" value="1"/>
</dbReference>
<dbReference type="FunFam" id="1.10.260.40:FF:000002">
    <property type="entry name" value="HTH-type transcriptional repressor PurR"/>
    <property type="match status" value="1"/>
</dbReference>
<dbReference type="Gene3D" id="3.40.50.2300">
    <property type="match status" value="2"/>
</dbReference>
<dbReference type="Gene3D" id="1.10.260.40">
    <property type="entry name" value="lambda repressor-like DNA-binding domains"/>
    <property type="match status" value="1"/>
</dbReference>
<dbReference type="InterPro" id="IPR006377">
    <property type="entry name" value="CcpA"/>
</dbReference>
<dbReference type="InterPro" id="IPR000843">
    <property type="entry name" value="HTH_LacI"/>
</dbReference>
<dbReference type="InterPro" id="IPR046335">
    <property type="entry name" value="LacI/GalR-like_sensor"/>
</dbReference>
<dbReference type="InterPro" id="IPR010982">
    <property type="entry name" value="Lambda_DNA-bd_dom_sf"/>
</dbReference>
<dbReference type="InterPro" id="IPR028082">
    <property type="entry name" value="Peripla_BP_I"/>
</dbReference>
<dbReference type="NCBIfam" id="TIGR01481">
    <property type="entry name" value="ccpA"/>
    <property type="match status" value="1"/>
</dbReference>
<dbReference type="PANTHER" id="PTHR30146:SF150">
    <property type="entry name" value="ARABINOSE METABOLISM TRANSCRIPTIONAL REPRESSOR"/>
    <property type="match status" value="1"/>
</dbReference>
<dbReference type="PANTHER" id="PTHR30146">
    <property type="entry name" value="LACI-RELATED TRANSCRIPTIONAL REPRESSOR"/>
    <property type="match status" value="1"/>
</dbReference>
<dbReference type="Pfam" id="PF00356">
    <property type="entry name" value="LacI"/>
    <property type="match status" value="1"/>
</dbReference>
<dbReference type="Pfam" id="PF13377">
    <property type="entry name" value="Peripla_BP_3"/>
    <property type="match status" value="1"/>
</dbReference>
<dbReference type="PRINTS" id="PR00036">
    <property type="entry name" value="HTHLACI"/>
</dbReference>
<dbReference type="SMART" id="SM00354">
    <property type="entry name" value="HTH_LACI"/>
    <property type="match status" value="1"/>
</dbReference>
<dbReference type="SUPFAM" id="SSF47413">
    <property type="entry name" value="lambda repressor-like DNA-binding domains"/>
    <property type="match status" value="1"/>
</dbReference>
<dbReference type="SUPFAM" id="SSF53822">
    <property type="entry name" value="Periplasmic binding protein-like I"/>
    <property type="match status" value="1"/>
</dbReference>
<dbReference type="PROSITE" id="PS00356">
    <property type="entry name" value="HTH_LACI_1"/>
    <property type="match status" value="1"/>
</dbReference>
<dbReference type="PROSITE" id="PS50932">
    <property type="entry name" value="HTH_LACI_2"/>
    <property type="match status" value="1"/>
</dbReference>
<feature type="chain" id="PRO_0000107930" description="Catabolite control protein A">
    <location>
        <begin position="1"/>
        <end position="329"/>
    </location>
</feature>
<feature type="domain" description="HTH lacI-type" evidence="2">
    <location>
        <begin position="1"/>
        <end position="57"/>
    </location>
</feature>
<feature type="DNA-binding region" description="H-T-H motif" evidence="2">
    <location>
        <begin position="5"/>
        <end position="24"/>
    </location>
</feature>
<accession>Q6G8J1</accession>
<keyword id="KW-0010">Activator</keyword>
<keyword id="KW-0238">DNA-binding</keyword>
<keyword id="KW-0678">Repressor</keyword>
<keyword id="KW-0804">Transcription</keyword>
<keyword id="KW-0805">Transcription regulation</keyword>
<protein>
    <recommendedName>
        <fullName>Catabolite control protein A</fullName>
    </recommendedName>
</protein>
<comment type="function">
    <text evidence="1">Global transcriptional regulator of carbon catabolite repression (CCR) and carbon catabolite activation (CCA), which ensures optimal energy usage under diverse conditions.</text>
</comment>
<gene>
    <name type="primary">ccpA</name>
    <name type="ordered locus">SAS1662</name>
</gene>
<evidence type="ECO:0000250" key="1"/>
<evidence type="ECO:0000255" key="2">
    <source>
        <dbReference type="PROSITE-ProRule" id="PRU00111"/>
    </source>
</evidence>
<sequence>MTVTIYDVAREARVSMATVSRVVNGNQNVKAETKNKVNEVIKRLNYRPNAVARGLASKKTTTVGVIIPDISNIYYSQLARGLEDIATMYKYHSIISNSDNDPEKEKEIFNNLLSKQVDGIIFLGGTITEEMKELINQSSVPVVVSGTNGKDAHIASVNIDFTEAAKEITGELIEKGAKSFALVGGEHSKKAQEDVLEGLTEVLNKNGLQLGDTLNCSGAESYKEGVKAFAKMKGNLPDAILCISDEEAIGIMHSAMDAGIKVPEELQIISFNNTRLVEMVRPQLSSVIQPLYDIGAVGMRLLTKYMNDEKIEEPNVVLPHRIEYRGTTK</sequence>
<name>CCPA_STAAS</name>
<reference key="1">
    <citation type="journal article" date="2004" name="Proc. Natl. Acad. Sci. U.S.A.">
        <title>Complete genomes of two clinical Staphylococcus aureus strains: evidence for the rapid evolution of virulence and drug resistance.</title>
        <authorList>
            <person name="Holden M.T.G."/>
            <person name="Feil E.J."/>
            <person name="Lindsay J.A."/>
            <person name="Peacock S.J."/>
            <person name="Day N.P.J."/>
            <person name="Enright M.C."/>
            <person name="Foster T.J."/>
            <person name="Moore C.E."/>
            <person name="Hurst L."/>
            <person name="Atkin R."/>
            <person name="Barron A."/>
            <person name="Bason N."/>
            <person name="Bentley S.D."/>
            <person name="Chillingworth C."/>
            <person name="Chillingworth T."/>
            <person name="Churcher C."/>
            <person name="Clark L."/>
            <person name="Corton C."/>
            <person name="Cronin A."/>
            <person name="Doggett J."/>
            <person name="Dowd L."/>
            <person name="Feltwell T."/>
            <person name="Hance Z."/>
            <person name="Harris B."/>
            <person name="Hauser H."/>
            <person name="Holroyd S."/>
            <person name="Jagels K."/>
            <person name="James K.D."/>
            <person name="Lennard N."/>
            <person name="Line A."/>
            <person name="Mayes R."/>
            <person name="Moule S."/>
            <person name="Mungall K."/>
            <person name="Ormond D."/>
            <person name="Quail M.A."/>
            <person name="Rabbinowitsch E."/>
            <person name="Rutherford K.M."/>
            <person name="Sanders M."/>
            <person name="Sharp S."/>
            <person name="Simmonds M."/>
            <person name="Stevens K."/>
            <person name="Whitehead S."/>
            <person name="Barrell B.G."/>
            <person name="Spratt B.G."/>
            <person name="Parkhill J."/>
        </authorList>
    </citation>
    <scope>NUCLEOTIDE SEQUENCE [LARGE SCALE GENOMIC DNA]</scope>
    <source>
        <strain>MSSA476</strain>
    </source>
</reference>
<proteinExistence type="inferred from homology"/>
<organism>
    <name type="scientific">Staphylococcus aureus (strain MSSA476)</name>
    <dbReference type="NCBI Taxonomy" id="282459"/>
    <lineage>
        <taxon>Bacteria</taxon>
        <taxon>Bacillati</taxon>
        <taxon>Bacillota</taxon>
        <taxon>Bacilli</taxon>
        <taxon>Bacillales</taxon>
        <taxon>Staphylococcaceae</taxon>
        <taxon>Staphylococcus</taxon>
    </lineage>
</organism>